<evidence type="ECO:0000255" key="1">
    <source>
        <dbReference type="HAMAP-Rule" id="MF_00191"/>
    </source>
</evidence>
<protein>
    <recommendedName>
        <fullName evidence="1">4-hydroxy-3-methylbut-2-enyl diphosphate reductase</fullName>
        <shortName evidence="1">HMBPP reductase</shortName>
        <ecNumber evidence="1">1.17.7.4</ecNumber>
    </recommendedName>
</protein>
<feature type="chain" id="PRO_1000021125" description="4-hydroxy-3-methylbut-2-enyl diphosphate reductase">
    <location>
        <begin position="1"/>
        <end position="318"/>
    </location>
</feature>
<feature type="active site" description="Proton donor" evidence="1">
    <location>
        <position position="126"/>
    </location>
</feature>
<feature type="binding site" evidence="1">
    <location>
        <position position="12"/>
    </location>
    <ligand>
        <name>[4Fe-4S] cluster</name>
        <dbReference type="ChEBI" id="CHEBI:49883"/>
    </ligand>
</feature>
<feature type="binding site" evidence="1">
    <location>
        <position position="41"/>
    </location>
    <ligand>
        <name>(2E)-4-hydroxy-3-methylbut-2-enyl diphosphate</name>
        <dbReference type="ChEBI" id="CHEBI:128753"/>
    </ligand>
</feature>
<feature type="binding site" evidence="1">
    <location>
        <position position="41"/>
    </location>
    <ligand>
        <name>dimethylallyl diphosphate</name>
        <dbReference type="ChEBI" id="CHEBI:57623"/>
    </ligand>
</feature>
<feature type="binding site" evidence="1">
    <location>
        <position position="41"/>
    </location>
    <ligand>
        <name>isopentenyl diphosphate</name>
        <dbReference type="ChEBI" id="CHEBI:128769"/>
    </ligand>
</feature>
<feature type="binding site" evidence="1">
    <location>
        <position position="74"/>
    </location>
    <ligand>
        <name>(2E)-4-hydroxy-3-methylbut-2-enyl diphosphate</name>
        <dbReference type="ChEBI" id="CHEBI:128753"/>
    </ligand>
</feature>
<feature type="binding site" evidence="1">
    <location>
        <position position="74"/>
    </location>
    <ligand>
        <name>dimethylallyl diphosphate</name>
        <dbReference type="ChEBI" id="CHEBI:57623"/>
    </ligand>
</feature>
<feature type="binding site" evidence="1">
    <location>
        <position position="74"/>
    </location>
    <ligand>
        <name>isopentenyl diphosphate</name>
        <dbReference type="ChEBI" id="CHEBI:128769"/>
    </ligand>
</feature>
<feature type="binding site" evidence="1">
    <location>
        <position position="96"/>
    </location>
    <ligand>
        <name>[4Fe-4S] cluster</name>
        <dbReference type="ChEBI" id="CHEBI:49883"/>
    </ligand>
</feature>
<feature type="binding site" evidence="1">
    <location>
        <position position="124"/>
    </location>
    <ligand>
        <name>(2E)-4-hydroxy-3-methylbut-2-enyl diphosphate</name>
        <dbReference type="ChEBI" id="CHEBI:128753"/>
    </ligand>
</feature>
<feature type="binding site" evidence="1">
    <location>
        <position position="124"/>
    </location>
    <ligand>
        <name>dimethylallyl diphosphate</name>
        <dbReference type="ChEBI" id="CHEBI:57623"/>
    </ligand>
</feature>
<feature type="binding site" evidence="1">
    <location>
        <position position="124"/>
    </location>
    <ligand>
        <name>isopentenyl diphosphate</name>
        <dbReference type="ChEBI" id="CHEBI:128769"/>
    </ligand>
</feature>
<feature type="binding site" evidence="1">
    <location>
        <position position="167"/>
    </location>
    <ligand>
        <name>(2E)-4-hydroxy-3-methylbut-2-enyl diphosphate</name>
        <dbReference type="ChEBI" id="CHEBI:128753"/>
    </ligand>
</feature>
<feature type="binding site" evidence="1">
    <location>
        <position position="197"/>
    </location>
    <ligand>
        <name>[4Fe-4S] cluster</name>
        <dbReference type="ChEBI" id="CHEBI:49883"/>
    </ligand>
</feature>
<feature type="binding site" evidence="1">
    <location>
        <position position="225"/>
    </location>
    <ligand>
        <name>(2E)-4-hydroxy-3-methylbut-2-enyl diphosphate</name>
        <dbReference type="ChEBI" id="CHEBI:128753"/>
    </ligand>
</feature>
<feature type="binding site" evidence="1">
    <location>
        <position position="225"/>
    </location>
    <ligand>
        <name>dimethylallyl diphosphate</name>
        <dbReference type="ChEBI" id="CHEBI:57623"/>
    </ligand>
</feature>
<feature type="binding site" evidence="1">
    <location>
        <position position="225"/>
    </location>
    <ligand>
        <name>isopentenyl diphosphate</name>
        <dbReference type="ChEBI" id="CHEBI:128769"/>
    </ligand>
</feature>
<feature type="binding site" evidence="1">
    <location>
        <position position="226"/>
    </location>
    <ligand>
        <name>(2E)-4-hydroxy-3-methylbut-2-enyl diphosphate</name>
        <dbReference type="ChEBI" id="CHEBI:128753"/>
    </ligand>
</feature>
<feature type="binding site" evidence="1">
    <location>
        <position position="226"/>
    </location>
    <ligand>
        <name>dimethylallyl diphosphate</name>
        <dbReference type="ChEBI" id="CHEBI:57623"/>
    </ligand>
</feature>
<feature type="binding site" evidence="1">
    <location>
        <position position="226"/>
    </location>
    <ligand>
        <name>isopentenyl diphosphate</name>
        <dbReference type="ChEBI" id="CHEBI:128769"/>
    </ligand>
</feature>
<feature type="binding site" evidence="1">
    <location>
        <position position="227"/>
    </location>
    <ligand>
        <name>(2E)-4-hydroxy-3-methylbut-2-enyl diphosphate</name>
        <dbReference type="ChEBI" id="CHEBI:128753"/>
    </ligand>
</feature>
<feature type="binding site" evidence="1">
    <location>
        <position position="227"/>
    </location>
    <ligand>
        <name>dimethylallyl diphosphate</name>
        <dbReference type="ChEBI" id="CHEBI:57623"/>
    </ligand>
</feature>
<feature type="binding site" evidence="1">
    <location>
        <position position="227"/>
    </location>
    <ligand>
        <name>isopentenyl diphosphate</name>
        <dbReference type="ChEBI" id="CHEBI:128769"/>
    </ligand>
</feature>
<feature type="binding site" evidence="1">
    <location>
        <position position="269"/>
    </location>
    <ligand>
        <name>(2E)-4-hydroxy-3-methylbut-2-enyl diphosphate</name>
        <dbReference type="ChEBI" id="CHEBI:128753"/>
    </ligand>
</feature>
<feature type="binding site" evidence="1">
    <location>
        <position position="269"/>
    </location>
    <ligand>
        <name>dimethylallyl diphosphate</name>
        <dbReference type="ChEBI" id="CHEBI:57623"/>
    </ligand>
</feature>
<feature type="binding site" evidence="1">
    <location>
        <position position="269"/>
    </location>
    <ligand>
        <name>isopentenyl diphosphate</name>
        <dbReference type="ChEBI" id="CHEBI:128769"/>
    </ligand>
</feature>
<dbReference type="EC" id="1.17.7.4" evidence="1"/>
<dbReference type="EMBL" id="CP000608">
    <property type="protein sequence ID" value="ABO47113.1"/>
    <property type="molecule type" value="Genomic_DNA"/>
</dbReference>
<dbReference type="RefSeq" id="WP_003020788.1">
    <property type="nucleotide sequence ID" value="NC_009257.1"/>
</dbReference>
<dbReference type="SMR" id="A4IYW2"/>
<dbReference type="KEGG" id="ftw:FTW_1353"/>
<dbReference type="HOGENOM" id="CLU_027486_1_0_6"/>
<dbReference type="UniPathway" id="UPA00056">
    <property type="reaction ID" value="UER00097"/>
</dbReference>
<dbReference type="UniPathway" id="UPA00059">
    <property type="reaction ID" value="UER00105"/>
</dbReference>
<dbReference type="GO" id="GO:0051539">
    <property type="term" value="F:4 iron, 4 sulfur cluster binding"/>
    <property type="evidence" value="ECO:0007669"/>
    <property type="project" value="UniProtKB-UniRule"/>
</dbReference>
<dbReference type="GO" id="GO:0051745">
    <property type="term" value="F:4-hydroxy-3-methylbut-2-enyl diphosphate reductase activity"/>
    <property type="evidence" value="ECO:0007669"/>
    <property type="project" value="UniProtKB-UniRule"/>
</dbReference>
<dbReference type="GO" id="GO:0046872">
    <property type="term" value="F:metal ion binding"/>
    <property type="evidence" value="ECO:0007669"/>
    <property type="project" value="UniProtKB-KW"/>
</dbReference>
<dbReference type="GO" id="GO:0050992">
    <property type="term" value="P:dimethylallyl diphosphate biosynthetic process"/>
    <property type="evidence" value="ECO:0007669"/>
    <property type="project" value="UniProtKB-UniRule"/>
</dbReference>
<dbReference type="GO" id="GO:0019288">
    <property type="term" value="P:isopentenyl diphosphate biosynthetic process, methylerythritol 4-phosphate pathway"/>
    <property type="evidence" value="ECO:0007669"/>
    <property type="project" value="UniProtKB-UniRule"/>
</dbReference>
<dbReference type="GO" id="GO:0016114">
    <property type="term" value="P:terpenoid biosynthetic process"/>
    <property type="evidence" value="ECO:0007669"/>
    <property type="project" value="UniProtKB-UniRule"/>
</dbReference>
<dbReference type="CDD" id="cd13944">
    <property type="entry name" value="lytB_ispH"/>
    <property type="match status" value="1"/>
</dbReference>
<dbReference type="Gene3D" id="3.40.50.11270">
    <property type="match status" value="1"/>
</dbReference>
<dbReference type="Gene3D" id="3.40.1010.20">
    <property type="entry name" value="4-hydroxy-3-methylbut-2-enyl diphosphate reductase, catalytic domain"/>
    <property type="match status" value="2"/>
</dbReference>
<dbReference type="HAMAP" id="MF_00191">
    <property type="entry name" value="IspH"/>
    <property type="match status" value="1"/>
</dbReference>
<dbReference type="InterPro" id="IPR003451">
    <property type="entry name" value="LytB/IspH"/>
</dbReference>
<dbReference type="NCBIfam" id="TIGR00216">
    <property type="entry name" value="ispH_lytB"/>
    <property type="match status" value="1"/>
</dbReference>
<dbReference type="NCBIfam" id="NF002188">
    <property type="entry name" value="PRK01045.1-2"/>
    <property type="match status" value="1"/>
</dbReference>
<dbReference type="NCBIfam" id="NF002190">
    <property type="entry name" value="PRK01045.1-4"/>
    <property type="match status" value="1"/>
</dbReference>
<dbReference type="PANTHER" id="PTHR30426">
    <property type="entry name" value="4-HYDROXY-3-METHYLBUT-2-ENYL DIPHOSPHATE REDUCTASE"/>
    <property type="match status" value="1"/>
</dbReference>
<dbReference type="PANTHER" id="PTHR30426:SF0">
    <property type="entry name" value="4-HYDROXY-3-METHYLBUT-2-ENYL DIPHOSPHATE REDUCTASE"/>
    <property type="match status" value="1"/>
</dbReference>
<dbReference type="Pfam" id="PF02401">
    <property type="entry name" value="LYTB"/>
    <property type="match status" value="1"/>
</dbReference>
<comment type="function">
    <text evidence="1">Catalyzes the conversion of 1-hydroxy-2-methyl-2-(E)-butenyl 4-diphosphate (HMBPP) into a mixture of isopentenyl diphosphate (IPP) and dimethylallyl diphosphate (DMAPP). Acts in the terminal step of the DOXP/MEP pathway for isoprenoid precursor biosynthesis.</text>
</comment>
<comment type="catalytic activity">
    <reaction evidence="1">
        <text>isopentenyl diphosphate + 2 oxidized [2Fe-2S]-[ferredoxin] + H2O = (2E)-4-hydroxy-3-methylbut-2-enyl diphosphate + 2 reduced [2Fe-2S]-[ferredoxin] + 2 H(+)</text>
        <dbReference type="Rhea" id="RHEA:24488"/>
        <dbReference type="Rhea" id="RHEA-COMP:10000"/>
        <dbReference type="Rhea" id="RHEA-COMP:10001"/>
        <dbReference type="ChEBI" id="CHEBI:15377"/>
        <dbReference type="ChEBI" id="CHEBI:15378"/>
        <dbReference type="ChEBI" id="CHEBI:33737"/>
        <dbReference type="ChEBI" id="CHEBI:33738"/>
        <dbReference type="ChEBI" id="CHEBI:128753"/>
        <dbReference type="ChEBI" id="CHEBI:128769"/>
        <dbReference type="EC" id="1.17.7.4"/>
    </reaction>
</comment>
<comment type="catalytic activity">
    <reaction evidence="1">
        <text>dimethylallyl diphosphate + 2 oxidized [2Fe-2S]-[ferredoxin] + H2O = (2E)-4-hydroxy-3-methylbut-2-enyl diphosphate + 2 reduced [2Fe-2S]-[ferredoxin] + 2 H(+)</text>
        <dbReference type="Rhea" id="RHEA:24825"/>
        <dbReference type="Rhea" id="RHEA-COMP:10000"/>
        <dbReference type="Rhea" id="RHEA-COMP:10001"/>
        <dbReference type="ChEBI" id="CHEBI:15377"/>
        <dbReference type="ChEBI" id="CHEBI:15378"/>
        <dbReference type="ChEBI" id="CHEBI:33737"/>
        <dbReference type="ChEBI" id="CHEBI:33738"/>
        <dbReference type="ChEBI" id="CHEBI:57623"/>
        <dbReference type="ChEBI" id="CHEBI:128753"/>
        <dbReference type="EC" id="1.17.7.4"/>
    </reaction>
</comment>
<comment type="cofactor">
    <cofactor evidence="1">
        <name>[4Fe-4S] cluster</name>
        <dbReference type="ChEBI" id="CHEBI:49883"/>
    </cofactor>
    <text evidence="1">Binds 1 [4Fe-4S] cluster per subunit.</text>
</comment>
<comment type="pathway">
    <text evidence="1">Isoprenoid biosynthesis; dimethylallyl diphosphate biosynthesis; dimethylallyl diphosphate from (2E)-4-hydroxy-3-methylbutenyl diphosphate: step 1/1.</text>
</comment>
<comment type="pathway">
    <text evidence="1">Isoprenoid biosynthesis; isopentenyl diphosphate biosynthesis via DXP pathway; isopentenyl diphosphate from 1-deoxy-D-xylulose 5-phosphate: step 6/6.</text>
</comment>
<comment type="similarity">
    <text evidence="1">Belongs to the IspH family.</text>
</comment>
<sequence length="318" mass="35152">MKILLANPRGFCAGVSRAVETVEKVLEVEKSPVYVRHEVVHNKVVVDSLKKKGVVFVKEVDEVPDDAVCIFSAHGVSLKVEEAAAKKNLVLYDATCPLVTKVHRGVRLASNNDAECILIGHKGHPEVQGTMGQYRSKKGAIYLIESEEDLNKLTIKDPDNLYYATQTTLSVDETQGIIQALKDKYPNIKGPKKEDICYATQNRQTAIKAMLKHIDVLVVVGSQNSSNSNRLKELATLEGIDAYLVDNPKDVDKLWFDNKKVCGVSAGASAPEYLVQQIISQISKVCSTEVEEFEGIKEEVYFPLPRLLKQKIGTGKVE</sequence>
<organism>
    <name type="scientific">Francisella tularensis subsp. tularensis (strain WY96-3418)</name>
    <dbReference type="NCBI Taxonomy" id="418136"/>
    <lineage>
        <taxon>Bacteria</taxon>
        <taxon>Pseudomonadati</taxon>
        <taxon>Pseudomonadota</taxon>
        <taxon>Gammaproteobacteria</taxon>
        <taxon>Thiotrichales</taxon>
        <taxon>Francisellaceae</taxon>
        <taxon>Francisella</taxon>
    </lineage>
</organism>
<accession>A4IYW2</accession>
<name>ISPH_FRATW</name>
<reference key="1">
    <citation type="journal article" date="2007" name="PLoS ONE">
        <title>Complete genomic characterization of a pathogenic A.II strain of Francisella tularensis subspecies tularensis.</title>
        <authorList>
            <person name="Beckstrom-Sternberg S.M."/>
            <person name="Auerbach R.K."/>
            <person name="Godbole S."/>
            <person name="Pearson J.V."/>
            <person name="Beckstrom-Sternberg J.S."/>
            <person name="Deng Z."/>
            <person name="Munk C."/>
            <person name="Kubota K."/>
            <person name="Zhou Y."/>
            <person name="Bruce D."/>
            <person name="Noronha J."/>
            <person name="Scheuermann R.H."/>
            <person name="Wang A."/>
            <person name="Wei X."/>
            <person name="Wang J."/>
            <person name="Hao J."/>
            <person name="Wagner D.M."/>
            <person name="Brettin T.S."/>
            <person name="Brown N."/>
            <person name="Gilna P."/>
            <person name="Keim P.S."/>
        </authorList>
    </citation>
    <scope>NUCLEOTIDE SEQUENCE [LARGE SCALE GENOMIC DNA]</scope>
    <source>
        <strain>WY96-3418</strain>
    </source>
</reference>
<proteinExistence type="inferred from homology"/>
<keyword id="KW-0004">4Fe-4S</keyword>
<keyword id="KW-0408">Iron</keyword>
<keyword id="KW-0411">Iron-sulfur</keyword>
<keyword id="KW-0414">Isoprene biosynthesis</keyword>
<keyword id="KW-0479">Metal-binding</keyword>
<keyword id="KW-0560">Oxidoreductase</keyword>
<gene>
    <name evidence="1" type="primary">ispH</name>
    <name type="ordered locus">FTW_1353</name>
</gene>